<gene>
    <name type="primary">oppF</name>
    <name type="ordered locus">MPN_218</name>
    <name type="ORF">MP613</name>
</gene>
<evidence type="ECO:0000250" key="1">
    <source>
        <dbReference type="UniProtKB" id="P24137"/>
    </source>
</evidence>
<evidence type="ECO:0000255" key="2">
    <source>
        <dbReference type="PROSITE-ProRule" id="PRU00434"/>
    </source>
</evidence>
<evidence type="ECO:0000305" key="3"/>
<sequence>METKKQKQNPLVNVKALSMLFKVRGSFFKALDEIDFTVNEGDFFGVIGESGSGKSTTGKCLIRLNIPSGGKVEIANHLISGKKLTRENDHWLKQNVQMVFQDPYSSLNPTKNVLTVISEPLVITKTVYGEVKEYLKTLAKLSFKTKKELLREDFELETQFYEKFFSKVLFHLETTINKFALLQESNNNSSAELAQTILGHTDDLIEALRQEFGLVYEFSSSQSEPLQKALKDKQETLAQDTIDKLKQELYTTQQKAKVSTQAFATWQKLQQTKQNLKAYRAQMAEELQNKPRIYLNAWLLTTKNYIKDSRQNTQLTDDVFAFSYNDMVDKKRRLVLVLSEYYKALPYFYDNWIHQNADRFDELTNAVFFDLIDVVIALNRDFANVESDAKAELIRFVQFIRRLCDLRFAALKKSFKKQTNYSFDFNRETELLYANSCYDIKELPQVIQPYWEKLFSDANYDKIAKSVQELNDIISTDIEKASNIASEINTKISSFKTEIAELKATFKTEKKAEDHSAQITGLKTQIAEIQTQIKQQKREVQSTEKAALKPVLKQYKSALHLYKRFKQLLRQFTKQLNLLVKKQQELEKIEEGLDLTIWERIQLLFYPVEGDLKSELKTRLKSFGVINFEYKRAVRESRVFRLVHFGHDVMKWGLFLPLTKIFMRNKVYEALDSVGLKREHAYRYPHEFSGGQRQRIAIARALITKPKLIIADELISALDVSIQAQVINILKDLAKKHNLTVLFIAHDLSMVQTVCNRLIIMHRGKIVERGSTDEIFAHPVHPYTRSLIKASPKLSKINIDLASFDEKFTYDSDYSLTNMPSFLKVPNTQEHELYCTQGQFDSWIKGASRIN</sequence>
<keyword id="KW-0067">ATP-binding</keyword>
<keyword id="KW-1003">Cell membrane</keyword>
<keyword id="KW-0472">Membrane</keyword>
<keyword id="KW-0547">Nucleotide-binding</keyword>
<keyword id="KW-0571">Peptide transport</keyword>
<keyword id="KW-0653">Protein transport</keyword>
<keyword id="KW-1185">Reference proteome</keyword>
<keyword id="KW-1278">Translocase</keyword>
<keyword id="KW-0813">Transport</keyword>
<dbReference type="EC" id="7.4.2.6" evidence="1"/>
<dbReference type="EMBL" id="U00089">
    <property type="protein sequence ID" value="AAB96261.1"/>
    <property type="molecule type" value="Genomic_DNA"/>
</dbReference>
<dbReference type="PIR" id="S73939">
    <property type="entry name" value="S73939"/>
</dbReference>
<dbReference type="RefSeq" id="NP_109906.1">
    <property type="nucleotide sequence ID" value="NC_000912.1"/>
</dbReference>
<dbReference type="RefSeq" id="WP_010874575.1">
    <property type="nucleotide sequence ID" value="NC_000912.1"/>
</dbReference>
<dbReference type="SMR" id="P75551"/>
<dbReference type="IntAct" id="P75551">
    <property type="interactions" value="1"/>
</dbReference>
<dbReference type="STRING" id="272634.MPN_218"/>
<dbReference type="EnsemblBacteria" id="AAB96261">
    <property type="protein sequence ID" value="AAB96261"/>
    <property type="gene ID" value="MPN_218"/>
</dbReference>
<dbReference type="KEGG" id="mpn:MPN_218"/>
<dbReference type="PATRIC" id="fig|272634.6.peg.237"/>
<dbReference type="HOGENOM" id="CLU_016927_0_0_14"/>
<dbReference type="OrthoDB" id="400883at2"/>
<dbReference type="BioCyc" id="MPNE272634:G1GJ3-351-MONOMER"/>
<dbReference type="Proteomes" id="UP000000808">
    <property type="component" value="Chromosome"/>
</dbReference>
<dbReference type="GO" id="GO:0005886">
    <property type="term" value="C:plasma membrane"/>
    <property type="evidence" value="ECO:0007669"/>
    <property type="project" value="UniProtKB-SubCell"/>
</dbReference>
<dbReference type="GO" id="GO:0005524">
    <property type="term" value="F:ATP binding"/>
    <property type="evidence" value="ECO:0007669"/>
    <property type="project" value="UniProtKB-KW"/>
</dbReference>
<dbReference type="GO" id="GO:0016887">
    <property type="term" value="F:ATP hydrolysis activity"/>
    <property type="evidence" value="ECO:0007669"/>
    <property type="project" value="InterPro"/>
</dbReference>
<dbReference type="GO" id="GO:0015833">
    <property type="term" value="P:peptide transport"/>
    <property type="evidence" value="ECO:0007669"/>
    <property type="project" value="UniProtKB-KW"/>
</dbReference>
<dbReference type="GO" id="GO:0015031">
    <property type="term" value="P:protein transport"/>
    <property type="evidence" value="ECO:0007669"/>
    <property type="project" value="UniProtKB-KW"/>
</dbReference>
<dbReference type="GO" id="GO:0055085">
    <property type="term" value="P:transmembrane transport"/>
    <property type="evidence" value="ECO:0007669"/>
    <property type="project" value="UniProtKB-ARBA"/>
</dbReference>
<dbReference type="Gene3D" id="1.20.5.1700">
    <property type="match status" value="1"/>
</dbReference>
<dbReference type="Gene3D" id="3.40.50.300">
    <property type="entry name" value="P-loop containing nucleotide triphosphate hydrolases"/>
    <property type="match status" value="2"/>
</dbReference>
<dbReference type="InterPro" id="IPR003593">
    <property type="entry name" value="AAA+_ATPase"/>
</dbReference>
<dbReference type="InterPro" id="IPR050319">
    <property type="entry name" value="ABC_transp_ATP-bind"/>
</dbReference>
<dbReference type="InterPro" id="IPR003439">
    <property type="entry name" value="ABC_transporter-like_ATP-bd"/>
</dbReference>
<dbReference type="InterPro" id="IPR017871">
    <property type="entry name" value="ABC_transporter-like_CS"/>
</dbReference>
<dbReference type="InterPro" id="IPR013563">
    <property type="entry name" value="Oligopep_ABC_C"/>
</dbReference>
<dbReference type="InterPro" id="IPR027417">
    <property type="entry name" value="P-loop_NTPase"/>
</dbReference>
<dbReference type="PANTHER" id="PTHR43776:SF7">
    <property type="entry name" value="D,D-DIPEPTIDE TRANSPORT ATP-BINDING PROTEIN DDPF-RELATED"/>
    <property type="match status" value="1"/>
</dbReference>
<dbReference type="PANTHER" id="PTHR43776">
    <property type="entry name" value="TRANSPORT ATP-BINDING PROTEIN"/>
    <property type="match status" value="1"/>
</dbReference>
<dbReference type="Pfam" id="PF00005">
    <property type="entry name" value="ABC_tran"/>
    <property type="match status" value="2"/>
</dbReference>
<dbReference type="Pfam" id="PF08352">
    <property type="entry name" value="oligo_HPY"/>
    <property type="match status" value="1"/>
</dbReference>
<dbReference type="SMART" id="SM00382">
    <property type="entry name" value="AAA"/>
    <property type="match status" value="1"/>
</dbReference>
<dbReference type="SUPFAM" id="SSF52540">
    <property type="entry name" value="P-loop containing nucleoside triphosphate hydrolases"/>
    <property type="match status" value="1"/>
</dbReference>
<dbReference type="PROSITE" id="PS00211">
    <property type="entry name" value="ABC_TRANSPORTER_1"/>
    <property type="match status" value="1"/>
</dbReference>
<dbReference type="PROSITE" id="PS50893">
    <property type="entry name" value="ABC_TRANSPORTER_2"/>
    <property type="match status" value="1"/>
</dbReference>
<organism>
    <name type="scientific">Mycoplasma pneumoniae (strain ATCC 29342 / M129 / Subtype 1)</name>
    <name type="common">Mycoplasmoides pneumoniae</name>
    <dbReference type="NCBI Taxonomy" id="272634"/>
    <lineage>
        <taxon>Bacteria</taxon>
        <taxon>Bacillati</taxon>
        <taxon>Mycoplasmatota</taxon>
        <taxon>Mycoplasmoidales</taxon>
        <taxon>Mycoplasmoidaceae</taxon>
        <taxon>Mycoplasmoides</taxon>
    </lineage>
</organism>
<protein>
    <recommendedName>
        <fullName evidence="3">Oligopeptide transport ATP-binding protein OppF</fullName>
        <ecNumber evidence="1">7.4.2.6</ecNumber>
    </recommendedName>
</protein>
<accession>P75551</accession>
<proteinExistence type="inferred from homology"/>
<name>OPPF_MYCPN</name>
<feature type="chain" id="PRO_0000092670" description="Oligopeptide transport ATP-binding protein OppF">
    <location>
        <begin position="1"/>
        <end position="851"/>
    </location>
</feature>
<feature type="domain" description="ABC transporter" evidence="2">
    <location>
        <begin position="14"/>
        <end position="788"/>
    </location>
</feature>
<feature type="binding site" evidence="2">
    <location>
        <begin position="48"/>
        <end position="55"/>
    </location>
    <ligand>
        <name>ATP</name>
        <dbReference type="ChEBI" id="CHEBI:30616"/>
    </ligand>
</feature>
<comment type="function">
    <text evidence="1">Part of the ABC transporter complex OppABCDF involved in the uptake of oligopeptides (By similarity). Probably responsible for energy coupling to the transport system (By similarity).</text>
</comment>
<comment type="catalytic activity">
    <reaction evidence="1">
        <text>a [peptide](out) + ATP + H2O = a [peptide](in) + ADP + phosphate + H(+)</text>
        <dbReference type="Rhea" id="RHEA:78459"/>
        <dbReference type="Rhea" id="RHEA-COMP:19083"/>
        <dbReference type="ChEBI" id="CHEBI:15377"/>
        <dbReference type="ChEBI" id="CHEBI:15378"/>
        <dbReference type="ChEBI" id="CHEBI:30616"/>
        <dbReference type="ChEBI" id="CHEBI:33710"/>
        <dbReference type="ChEBI" id="CHEBI:43474"/>
        <dbReference type="ChEBI" id="CHEBI:456216"/>
        <dbReference type="EC" id="7.4.2.6"/>
    </reaction>
    <physiologicalReaction direction="left-to-right" evidence="1">
        <dbReference type="Rhea" id="RHEA:78460"/>
    </physiologicalReaction>
</comment>
<comment type="subunit">
    <text evidence="1">The complex is composed of two ATP-binding proteins (OppD and OppF), two transmembrane proteins (OppB and OppC) and a solute-binding protein (OppA).</text>
</comment>
<comment type="subcellular location">
    <subcellularLocation>
        <location evidence="1">Cell membrane</location>
        <topology evidence="1">Peripheral membrane protein</topology>
    </subcellularLocation>
</comment>
<comment type="similarity">
    <text evidence="3">Belongs to the ABC transporter superfamily.</text>
</comment>
<reference key="1">
    <citation type="journal article" date="1996" name="Nucleic Acids Res.">
        <title>Complete sequence analysis of the genome of the bacterium Mycoplasma pneumoniae.</title>
        <authorList>
            <person name="Himmelreich R."/>
            <person name="Hilbert H."/>
            <person name="Plagens H."/>
            <person name="Pirkl E."/>
            <person name="Li B.-C."/>
            <person name="Herrmann R."/>
        </authorList>
    </citation>
    <scope>NUCLEOTIDE SEQUENCE [LARGE SCALE GENOMIC DNA]</scope>
    <source>
        <strain>ATCC 29342 / M129 / Subtype 1</strain>
    </source>
</reference>